<proteinExistence type="inferred from homology"/>
<accession>Q92337</accession>
<feature type="chain" id="PRO_0000093303" description="ATP-binding cassette transporter abc1">
    <location>
        <begin position="1"/>
        <end position="1427"/>
    </location>
</feature>
<feature type="transmembrane region" description="Helical" evidence="3">
    <location>
        <begin position="26"/>
        <end position="46"/>
    </location>
</feature>
<feature type="transmembrane region" description="Helical" evidence="3">
    <location>
        <begin position="63"/>
        <end position="83"/>
    </location>
</feature>
<feature type="transmembrane region" description="Helical" evidence="3">
    <location>
        <begin position="87"/>
        <end position="107"/>
    </location>
</feature>
<feature type="transmembrane region" description="Helical" evidence="3">
    <location>
        <begin position="115"/>
        <end position="135"/>
    </location>
</feature>
<feature type="transmembrane region" description="Helical" evidence="3">
    <location>
        <begin position="155"/>
        <end position="175"/>
    </location>
</feature>
<feature type="transmembrane region" description="Helical" evidence="3">
    <location>
        <begin position="197"/>
        <end position="217"/>
    </location>
</feature>
<feature type="transmembrane region" description="Helical" evidence="3">
    <location>
        <begin position="262"/>
        <end position="282"/>
    </location>
</feature>
<feature type="transmembrane region" description="Helical" evidence="3">
    <location>
        <begin position="298"/>
        <end position="318"/>
    </location>
</feature>
<feature type="transmembrane region" description="Helical" evidence="3">
    <location>
        <begin position="345"/>
        <end position="367"/>
    </location>
</feature>
<feature type="transmembrane region" description="Helical" evidence="3">
    <location>
        <begin position="397"/>
        <end position="417"/>
    </location>
</feature>
<feature type="transmembrane region" description="Helical" evidence="3">
    <location>
        <begin position="489"/>
        <end position="509"/>
    </location>
</feature>
<feature type="transmembrane region" description="Helical" evidence="3">
    <location>
        <begin position="513"/>
        <end position="533"/>
    </location>
</feature>
<feature type="transmembrane region" description="Helical" evidence="3">
    <location>
        <begin position="609"/>
        <end position="629"/>
    </location>
</feature>
<feature type="transmembrane region" description="Helical" evidence="3">
    <location>
        <begin position="760"/>
        <end position="780"/>
    </location>
</feature>
<feature type="transmembrane region" description="Helical" evidence="3">
    <location>
        <begin position="866"/>
        <end position="886"/>
    </location>
</feature>
<feature type="transmembrane region" description="Helical" evidence="3">
    <location>
        <begin position="896"/>
        <end position="916"/>
    </location>
</feature>
<feature type="transmembrane region" description="Helical" evidence="3">
    <location>
        <begin position="973"/>
        <end position="993"/>
    </location>
</feature>
<feature type="transmembrane region" description="Helical" evidence="3">
    <location>
        <begin position="995"/>
        <end position="1015"/>
    </location>
</feature>
<feature type="transmembrane region" description="Helical" evidence="3">
    <location>
        <begin position="1086"/>
        <end position="1106"/>
    </location>
</feature>
<feature type="transmembrane region" description="Helical" evidence="3">
    <location>
        <begin position="1114"/>
        <end position="1134"/>
    </location>
</feature>
<feature type="transmembrane region" description="Helical" evidence="3">
    <location>
        <begin position="1223"/>
        <end position="1243"/>
    </location>
</feature>
<feature type="domain" description="ABC transmembrane type-1 1" evidence="3">
    <location>
        <begin position="262"/>
        <end position="549"/>
    </location>
</feature>
<feature type="domain" description="ABC transporter 1" evidence="2">
    <location>
        <begin position="579"/>
        <end position="807"/>
    </location>
</feature>
<feature type="domain" description="ABC transmembrane type-1 2" evidence="3">
    <location>
        <begin position="862"/>
        <end position="1142"/>
    </location>
</feature>
<feature type="domain" description="ABC transporter 2" evidence="2">
    <location>
        <begin position="1180"/>
        <end position="1422"/>
    </location>
</feature>
<feature type="binding site" evidence="2">
    <location>
        <begin position="614"/>
        <end position="621"/>
    </location>
    <ligand>
        <name>ATP</name>
        <dbReference type="ChEBI" id="CHEBI:30616"/>
        <label>1</label>
    </ligand>
</feature>
<feature type="binding site" evidence="2">
    <location>
        <begin position="1214"/>
        <end position="1221"/>
    </location>
    <ligand>
        <name>ATP</name>
        <dbReference type="ChEBI" id="CHEBI:30616"/>
        <label>2</label>
    </ligand>
</feature>
<feature type="glycosylation site" description="N-linked (GlcNAc...) asparagine" evidence="1">
    <location>
        <position position="49"/>
    </location>
</feature>
<feature type="glycosylation site" description="N-linked (GlcNAc...) asparagine" evidence="1">
    <location>
        <position position="437"/>
    </location>
</feature>
<feature type="glycosylation site" description="N-linked (GlcNAc...) asparagine" evidence="1">
    <location>
        <position position="567"/>
    </location>
</feature>
<feature type="glycosylation site" description="N-linked (GlcNAc...) asparagine" evidence="1">
    <location>
        <position position="581"/>
    </location>
</feature>
<feature type="glycosylation site" description="N-linked (GlcNAc...) asparagine" evidence="1">
    <location>
        <position position="601"/>
    </location>
</feature>
<feature type="glycosylation site" description="N-linked (GlcNAc...) asparagine" evidence="1">
    <location>
        <position position="658"/>
    </location>
</feature>
<feature type="glycosylation site" description="N-linked (GlcNAc...) asparagine" evidence="1">
    <location>
        <position position="703"/>
    </location>
</feature>
<feature type="glycosylation site" description="N-linked (GlcNAc...) asparagine" evidence="1">
    <location>
        <position position="782"/>
    </location>
</feature>
<feature type="glycosylation site" description="N-linked (GlcNAc...) asparagine" evidence="1">
    <location>
        <position position="842"/>
    </location>
</feature>
<feature type="glycosylation site" description="N-linked (GlcNAc...) asparagine" evidence="1">
    <location>
        <position position="994"/>
    </location>
</feature>
<feature type="glycosylation site" description="N-linked (GlcNAc...) asparagine" evidence="1">
    <location>
        <position position="1161"/>
    </location>
</feature>
<feature type="glycosylation site" description="N-linked (GlcNAc...) asparagine" evidence="1">
    <location>
        <position position="1184"/>
    </location>
</feature>
<feature type="glycosylation site" description="N-linked (GlcNAc...) asparagine" evidence="1">
    <location>
        <position position="1324"/>
    </location>
</feature>
<protein>
    <recommendedName>
        <fullName>ATP-binding cassette transporter abc1</fullName>
    </recommendedName>
</protein>
<gene>
    <name type="primary">abc1</name>
    <name type="ORF">SPAC9E9.12c</name>
</gene>
<keyword id="KW-0067">ATP-binding</keyword>
<keyword id="KW-0325">Glycoprotein</keyword>
<keyword id="KW-0472">Membrane</keyword>
<keyword id="KW-0547">Nucleotide-binding</keyword>
<keyword id="KW-1185">Reference proteome</keyword>
<keyword id="KW-0677">Repeat</keyword>
<keyword id="KW-0812">Transmembrane</keyword>
<keyword id="KW-1133">Transmembrane helix</keyword>
<keyword id="KW-0813">Transport</keyword>
<reference key="1">
    <citation type="journal article" date="1997" name="FEMS Microbiol. Lett.">
        <title>Abc1: a new ABC transporter from the fission yeast Schizosaccharomyces pombe.</title>
        <authorList>
            <person name="Christensen P.U."/>
            <person name="Davis K."/>
            <person name="Nielsen O."/>
            <person name="Davey J."/>
        </authorList>
    </citation>
    <scope>NUCLEOTIDE SEQUENCE [GENOMIC DNA]</scope>
</reference>
<reference key="2">
    <citation type="journal article" date="2002" name="Nature">
        <title>The genome sequence of Schizosaccharomyces pombe.</title>
        <authorList>
            <person name="Wood V."/>
            <person name="Gwilliam R."/>
            <person name="Rajandream M.A."/>
            <person name="Lyne M.H."/>
            <person name="Lyne R."/>
            <person name="Stewart A."/>
            <person name="Sgouros J.G."/>
            <person name="Peat N."/>
            <person name="Hayles J."/>
            <person name="Baker S.G."/>
            <person name="Basham D."/>
            <person name="Bowman S."/>
            <person name="Brooks K."/>
            <person name="Brown D."/>
            <person name="Brown S."/>
            <person name="Chillingworth T."/>
            <person name="Churcher C.M."/>
            <person name="Collins M."/>
            <person name="Connor R."/>
            <person name="Cronin A."/>
            <person name="Davis P."/>
            <person name="Feltwell T."/>
            <person name="Fraser A."/>
            <person name="Gentles S."/>
            <person name="Goble A."/>
            <person name="Hamlin N."/>
            <person name="Harris D.E."/>
            <person name="Hidalgo J."/>
            <person name="Hodgson G."/>
            <person name="Holroyd S."/>
            <person name="Hornsby T."/>
            <person name="Howarth S."/>
            <person name="Huckle E.J."/>
            <person name="Hunt S."/>
            <person name="Jagels K."/>
            <person name="James K.D."/>
            <person name="Jones L."/>
            <person name="Jones M."/>
            <person name="Leather S."/>
            <person name="McDonald S."/>
            <person name="McLean J."/>
            <person name="Mooney P."/>
            <person name="Moule S."/>
            <person name="Mungall K.L."/>
            <person name="Murphy L.D."/>
            <person name="Niblett D."/>
            <person name="Odell C."/>
            <person name="Oliver K."/>
            <person name="O'Neil S."/>
            <person name="Pearson D."/>
            <person name="Quail M.A."/>
            <person name="Rabbinowitsch E."/>
            <person name="Rutherford K.M."/>
            <person name="Rutter S."/>
            <person name="Saunders D."/>
            <person name="Seeger K."/>
            <person name="Sharp S."/>
            <person name="Skelton J."/>
            <person name="Simmonds M.N."/>
            <person name="Squares R."/>
            <person name="Squares S."/>
            <person name="Stevens K."/>
            <person name="Taylor K."/>
            <person name="Taylor R.G."/>
            <person name="Tivey A."/>
            <person name="Walsh S.V."/>
            <person name="Warren T."/>
            <person name="Whitehead S."/>
            <person name="Woodward J.R."/>
            <person name="Volckaert G."/>
            <person name="Aert R."/>
            <person name="Robben J."/>
            <person name="Grymonprez B."/>
            <person name="Weltjens I."/>
            <person name="Vanstreels E."/>
            <person name="Rieger M."/>
            <person name="Schaefer M."/>
            <person name="Mueller-Auer S."/>
            <person name="Gabel C."/>
            <person name="Fuchs M."/>
            <person name="Duesterhoeft A."/>
            <person name="Fritzc C."/>
            <person name="Holzer E."/>
            <person name="Moestl D."/>
            <person name="Hilbert H."/>
            <person name="Borzym K."/>
            <person name="Langer I."/>
            <person name="Beck A."/>
            <person name="Lehrach H."/>
            <person name="Reinhardt R."/>
            <person name="Pohl T.M."/>
            <person name="Eger P."/>
            <person name="Zimmermann W."/>
            <person name="Wedler H."/>
            <person name="Wambutt R."/>
            <person name="Purnelle B."/>
            <person name="Goffeau A."/>
            <person name="Cadieu E."/>
            <person name="Dreano S."/>
            <person name="Gloux S."/>
            <person name="Lelaure V."/>
            <person name="Mottier S."/>
            <person name="Galibert F."/>
            <person name="Aves S.J."/>
            <person name="Xiang Z."/>
            <person name="Hunt C."/>
            <person name="Moore K."/>
            <person name="Hurst S.M."/>
            <person name="Lucas M."/>
            <person name="Rochet M."/>
            <person name="Gaillardin C."/>
            <person name="Tallada V.A."/>
            <person name="Garzon A."/>
            <person name="Thode G."/>
            <person name="Daga R.R."/>
            <person name="Cruzado L."/>
            <person name="Jimenez J."/>
            <person name="Sanchez M."/>
            <person name="del Rey F."/>
            <person name="Benito J."/>
            <person name="Dominguez A."/>
            <person name="Revuelta J.L."/>
            <person name="Moreno S."/>
            <person name="Armstrong J."/>
            <person name="Forsburg S.L."/>
            <person name="Cerutti L."/>
            <person name="Lowe T."/>
            <person name="McCombie W.R."/>
            <person name="Paulsen I."/>
            <person name="Potashkin J."/>
            <person name="Shpakovski G.V."/>
            <person name="Ussery D."/>
            <person name="Barrell B.G."/>
            <person name="Nurse P."/>
        </authorList>
    </citation>
    <scope>NUCLEOTIDE SEQUENCE [LARGE SCALE GENOMIC DNA]</scope>
    <source>
        <strain>972 / ATCC 24843</strain>
    </source>
</reference>
<sequence>MKMFQSFFSNYIDINFFRNATLDQCLLLFYLSLFSLTNLFLIQKLFHANHTQHPLKKYFGETCLLEYIQIILSIVSAALSFYLDTNAVWWAIRTITHLEIVGLNILSSLKYGSTLFSWISVANAFGLLLLRLISIYDFLTYSSWSFSVKGGSFLLLLPLAYNITLFLLVIIPLFFPRAWSPTVKFSKVARPSPEQTCSIFSLIFTYGWLNGIIWKSWKKPITLTDVPALPDTECTQIWYSRFAKNDRKSLMHTILLSLKSTILLMVFLSVLVSSTLFVTPLAIKKLLQYLQNPKSDEGNSPFLWVFVLLIGPYLASVVKELYVHVSRRFMLRIKAAITQMIYKKVLTSKTLFVAVDGSKINLDYVYNLLAKDVDNIGEMREFIGIIARAPLEMGVSMYFLYQLLGWSAYVGLLLAILSSSFPLLVASKISRLTSIANTSSDERIRLTTELLKSIKITKLFGWERPMLSRIQEKRSFEVNNMYSLTLFDIIFKSGMKIAPFISMFITFAIYTKIMGHQLTPATAFTSISMFGLLRYQFIWLASVSRQFIQFKVSLKRVDNFVYGNMVNDSSIESSDSFVFENTSLSWSPTPSTALFQLKNLNFTIPRNQFTLVVGSTGSGKSTLAMALLGELHVISGKMTTPSISQRIAYVPQAAWLRNGTIRSNILFGEPYDEERYFQIIKACCLDSDLNSMNDGDLTYIHSNGSSLSGGQKQRVSLARALYSNAEVYIFDDIFSALDVSTSRKIYESCFLSTLLQHKTIILFTHNVSLCLPIAENVIVLKNSTAQLVSPDSIQELVPSTFFSSNTKKDNIEEENLEPHSFSFDSTLASSSDNDEQRDFASNSSIVLLGLHYLKYFGSNKYILGSILLVMMSQVSLASIHFWIALWSGNSLFSLKLPSSFSFLWGYAILLFIYFLMDLSRAITFAKGGRTASENIHDILSERVLYSPLHWFEKTAAGRILNRFSKDMYATDNLLWASLEGMLLCVMAILITMLNVTLVMPIFMVPAAFVSLLVYLHGYAYSKAQKQLTSLQSSRTSPVFTMLGETLGGITVIRAFKKEKIFEHENMAFIDDMIQPLYISFAINRWLAIRTDGISGLVGFSTGLIALLRQNIPPGLVGFSLNSAIGFNISVLVFVRANNEILTYINNFRRLYEYMLLPSEKNESSCLTKPMNKEWPTLGHVSIKNLTVSYSIGQAAVLEDINLEILPKEKIAIVGRTGSGKSTMGLTLLRFTMIMSGAVEVDGIDINSLDLEVLRQRISLIPQDPVLISGTVRSNLDPFEEYGDGELNEILKTASCESLVQASNKNSLDAFAIHLDTPVDSGGVNFSSGQRQILALARALVRKSRIVILDESTASVDDTTDRRIQQMLRAAFKHATVLCIAHRIKTIVDYDKVLVLDSGKTVEFGSPKSLYTQRRAFWKMCKESHISL</sequence>
<dbReference type="EMBL" id="Y09354">
    <property type="protein sequence ID" value="CAA70526.1"/>
    <property type="molecule type" value="Genomic_DNA"/>
</dbReference>
<dbReference type="EMBL" id="CU329670">
    <property type="protein sequence ID" value="CAB16410.1"/>
    <property type="molecule type" value="Genomic_DNA"/>
</dbReference>
<dbReference type="PIR" id="T39219">
    <property type="entry name" value="T39219"/>
</dbReference>
<dbReference type="RefSeq" id="NP_594585.1">
    <property type="nucleotide sequence ID" value="NM_001020014.2"/>
</dbReference>
<dbReference type="SMR" id="Q92337"/>
<dbReference type="BioGRID" id="279094">
    <property type="interactions" value="10"/>
</dbReference>
<dbReference type="FunCoup" id="Q92337">
    <property type="interactions" value="42"/>
</dbReference>
<dbReference type="STRING" id="284812.Q92337"/>
<dbReference type="GlyCosmos" id="Q92337">
    <property type="glycosylation" value="13 sites, No reported glycans"/>
</dbReference>
<dbReference type="PaxDb" id="4896-SPAC9E9.12c.1"/>
<dbReference type="EnsemblFungi" id="SPAC9E9.12c.1">
    <property type="protein sequence ID" value="SPAC9E9.12c.1:pep"/>
    <property type="gene ID" value="SPAC9E9.12c"/>
</dbReference>
<dbReference type="GeneID" id="2542640"/>
<dbReference type="KEGG" id="spo:2542640"/>
<dbReference type="PomBase" id="SPAC9E9.12c">
    <property type="gene designation" value="abc1"/>
</dbReference>
<dbReference type="VEuPathDB" id="FungiDB:SPAC9E9.12c"/>
<dbReference type="eggNOG" id="KOG0054">
    <property type="taxonomic scope" value="Eukaryota"/>
</dbReference>
<dbReference type="HOGENOM" id="CLU_000604_27_6_1"/>
<dbReference type="InParanoid" id="Q92337"/>
<dbReference type="OMA" id="AITYWLS"/>
<dbReference type="PhylomeDB" id="Q92337"/>
<dbReference type="Reactome" id="R-SPO-159418">
    <property type="pathway name" value="Recycling of bile acids and salts"/>
</dbReference>
<dbReference type="Reactome" id="R-SPO-1660661">
    <property type="pathway name" value="Sphingolipid de novo biosynthesis"/>
</dbReference>
<dbReference type="Reactome" id="R-SPO-189483">
    <property type="pathway name" value="Heme degradation"/>
</dbReference>
<dbReference type="Reactome" id="R-SPO-2142691">
    <property type="pathway name" value="Synthesis of Leukotrienes (LT) and Eoxins (EX)"/>
</dbReference>
<dbReference type="Reactome" id="R-SPO-382556">
    <property type="pathway name" value="ABC-family proteins mediated transport"/>
</dbReference>
<dbReference type="Reactome" id="R-SPO-9707564">
    <property type="pathway name" value="Cytoprotection by HMOX1"/>
</dbReference>
<dbReference type="Reactome" id="R-SPO-9749641">
    <property type="pathway name" value="Aspirin ADME"/>
</dbReference>
<dbReference type="Reactome" id="R-SPO-9753281">
    <property type="pathway name" value="Paracetamol ADME"/>
</dbReference>
<dbReference type="Reactome" id="R-SPO-9754706">
    <property type="pathway name" value="Atorvastatin ADME"/>
</dbReference>
<dbReference type="Reactome" id="R-SPO-9758890">
    <property type="pathway name" value="Transport of RCbl within the body"/>
</dbReference>
<dbReference type="PRO" id="PR:Q92337"/>
<dbReference type="Proteomes" id="UP000002485">
    <property type="component" value="Chromosome I"/>
</dbReference>
<dbReference type="GO" id="GO:0005783">
    <property type="term" value="C:endoplasmic reticulum"/>
    <property type="evidence" value="ECO:0000314"/>
    <property type="project" value="PomBase"/>
</dbReference>
<dbReference type="GO" id="GO:0016020">
    <property type="term" value="C:membrane"/>
    <property type="evidence" value="ECO:0000318"/>
    <property type="project" value="GO_Central"/>
</dbReference>
<dbReference type="GO" id="GO:0140359">
    <property type="term" value="F:ABC-type transporter activity"/>
    <property type="evidence" value="ECO:0007669"/>
    <property type="project" value="InterPro"/>
</dbReference>
<dbReference type="GO" id="GO:0005524">
    <property type="term" value="F:ATP binding"/>
    <property type="evidence" value="ECO:0007669"/>
    <property type="project" value="UniProtKB-KW"/>
</dbReference>
<dbReference type="GO" id="GO:0016887">
    <property type="term" value="F:ATP hydrolysis activity"/>
    <property type="evidence" value="ECO:0007669"/>
    <property type="project" value="InterPro"/>
</dbReference>
<dbReference type="GO" id="GO:0042626">
    <property type="term" value="F:ATPase-coupled transmembrane transporter activity"/>
    <property type="evidence" value="ECO:0000318"/>
    <property type="project" value="GO_Central"/>
</dbReference>
<dbReference type="GO" id="GO:0055085">
    <property type="term" value="P:transmembrane transport"/>
    <property type="evidence" value="ECO:0000318"/>
    <property type="project" value="GO_Central"/>
</dbReference>
<dbReference type="CDD" id="cd18596">
    <property type="entry name" value="ABC_6TM_VMR1_D1_like"/>
    <property type="match status" value="1"/>
</dbReference>
<dbReference type="CDD" id="cd18604">
    <property type="entry name" value="ABC_6TM_VMR1_D2_like"/>
    <property type="match status" value="1"/>
</dbReference>
<dbReference type="CDD" id="cd03250">
    <property type="entry name" value="ABCC_MRP_domain1"/>
    <property type="match status" value="1"/>
</dbReference>
<dbReference type="CDD" id="cd03244">
    <property type="entry name" value="ABCC_MRP_domain2"/>
    <property type="match status" value="1"/>
</dbReference>
<dbReference type="FunFam" id="3.40.50.300:FF:000838">
    <property type="entry name" value="ABC multidrug transporter (Eurofung)"/>
    <property type="match status" value="1"/>
</dbReference>
<dbReference type="FunFam" id="3.40.50.300:FF:002039">
    <property type="entry name" value="ABC multidrug transporter, putative"/>
    <property type="match status" value="1"/>
</dbReference>
<dbReference type="FunFam" id="1.20.1560.10:FF:000013">
    <property type="entry name" value="ABC transporter C family member 2"/>
    <property type="match status" value="1"/>
</dbReference>
<dbReference type="FunFam" id="1.20.1560.10:FF:000220">
    <property type="entry name" value="Unplaced genomic scaffold supercont2.6, whole genome shotgun sequence"/>
    <property type="match status" value="1"/>
</dbReference>
<dbReference type="Gene3D" id="1.20.1560.10">
    <property type="entry name" value="ABC transporter type 1, transmembrane domain"/>
    <property type="match status" value="2"/>
</dbReference>
<dbReference type="Gene3D" id="3.40.50.300">
    <property type="entry name" value="P-loop containing nucleotide triphosphate hydrolases"/>
    <property type="match status" value="2"/>
</dbReference>
<dbReference type="InterPro" id="IPR003593">
    <property type="entry name" value="AAA+_ATPase"/>
</dbReference>
<dbReference type="InterPro" id="IPR011527">
    <property type="entry name" value="ABC1_TM_dom"/>
</dbReference>
<dbReference type="InterPro" id="IPR036640">
    <property type="entry name" value="ABC1_TM_sf"/>
</dbReference>
<dbReference type="InterPro" id="IPR003439">
    <property type="entry name" value="ABC_transporter-like_ATP-bd"/>
</dbReference>
<dbReference type="InterPro" id="IPR017871">
    <property type="entry name" value="ABC_transporter-like_CS"/>
</dbReference>
<dbReference type="InterPro" id="IPR050173">
    <property type="entry name" value="ABC_transporter_C-like"/>
</dbReference>
<dbReference type="InterPro" id="IPR027417">
    <property type="entry name" value="P-loop_NTPase"/>
</dbReference>
<dbReference type="PANTHER" id="PTHR24223">
    <property type="entry name" value="ATP-BINDING CASSETTE SUB-FAMILY C"/>
    <property type="match status" value="1"/>
</dbReference>
<dbReference type="PANTHER" id="PTHR24223:SF444">
    <property type="entry name" value="ATP-BINDING CASSETTE TRANSPORTER ABC1"/>
    <property type="match status" value="1"/>
</dbReference>
<dbReference type="Pfam" id="PF00664">
    <property type="entry name" value="ABC_membrane"/>
    <property type="match status" value="2"/>
</dbReference>
<dbReference type="Pfam" id="PF00005">
    <property type="entry name" value="ABC_tran"/>
    <property type="match status" value="2"/>
</dbReference>
<dbReference type="SMART" id="SM00382">
    <property type="entry name" value="AAA"/>
    <property type="match status" value="2"/>
</dbReference>
<dbReference type="SUPFAM" id="SSF90123">
    <property type="entry name" value="ABC transporter transmembrane region"/>
    <property type="match status" value="2"/>
</dbReference>
<dbReference type="SUPFAM" id="SSF52540">
    <property type="entry name" value="P-loop containing nucleoside triphosphate hydrolases"/>
    <property type="match status" value="2"/>
</dbReference>
<dbReference type="PROSITE" id="PS50929">
    <property type="entry name" value="ABC_TM1F"/>
    <property type="match status" value="2"/>
</dbReference>
<dbReference type="PROSITE" id="PS00211">
    <property type="entry name" value="ABC_TRANSPORTER_1"/>
    <property type="match status" value="1"/>
</dbReference>
<dbReference type="PROSITE" id="PS50893">
    <property type="entry name" value="ABC_TRANSPORTER_2"/>
    <property type="match status" value="2"/>
</dbReference>
<organism>
    <name type="scientific">Schizosaccharomyces pombe (strain 972 / ATCC 24843)</name>
    <name type="common">Fission yeast</name>
    <dbReference type="NCBI Taxonomy" id="284812"/>
    <lineage>
        <taxon>Eukaryota</taxon>
        <taxon>Fungi</taxon>
        <taxon>Dikarya</taxon>
        <taxon>Ascomycota</taxon>
        <taxon>Taphrinomycotina</taxon>
        <taxon>Schizosaccharomycetes</taxon>
        <taxon>Schizosaccharomycetales</taxon>
        <taxon>Schizosaccharomycetaceae</taxon>
        <taxon>Schizosaccharomyces</taxon>
    </lineage>
</organism>
<evidence type="ECO:0000255" key="1"/>
<evidence type="ECO:0000255" key="2">
    <source>
        <dbReference type="PROSITE-ProRule" id="PRU00434"/>
    </source>
</evidence>
<evidence type="ECO:0000255" key="3">
    <source>
        <dbReference type="PROSITE-ProRule" id="PRU00441"/>
    </source>
</evidence>
<evidence type="ECO:0000305" key="4"/>
<comment type="subcellular location">
    <subcellularLocation>
        <location evidence="3">Membrane</location>
        <topology evidence="3">Multi-pass membrane protein</topology>
    </subcellularLocation>
</comment>
<comment type="similarity">
    <text evidence="4">Belongs to the ABC transporter superfamily. ABCC family. Conjugate transporter (TC 3.A.1.208) subfamily.</text>
</comment>
<name>ABC1_SCHPO</name>